<feature type="chain" id="PRO_0000399952" description="Protein NRT1/ PTR FAMILY 3.1">
    <location>
        <begin position="1"/>
        <end position="596"/>
    </location>
</feature>
<feature type="transmembrane region" description="Helical" evidence="2">
    <location>
        <begin position="27"/>
        <end position="47"/>
    </location>
</feature>
<feature type="transmembrane region" description="Helical" evidence="2">
    <location>
        <begin position="73"/>
        <end position="93"/>
    </location>
</feature>
<feature type="transmembrane region" description="Helical" evidence="2">
    <location>
        <begin position="98"/>
        <end position="118"/>
    </location>
</feature>
<feature type="transmembrane region" description="Helical" evidence="2">
    <location>
        <begin position="137"/>
        <end position="157"/>
    </location>
</feature>
<feature type="transmembrane region" description="Helical" evidence="2">
    <location>
        <begin position="185"/>
        <end position="205"/>
    </location>
</feature>
<feature type="transmembrane region" description="Helical" evidence="2">
    <location>
        <begin position="213"/>
        <end position="233"/>
    </location>
</feature>
<feature type="transmembrane region" description="Helical" evidence="2">
    <location>
        <begin position="334"/>
        <end position="354"/>
    </location>
</feature>
<feature type="transmembrane region" description="Helical" evidence="2">
    <location>
        <begin position="372"/>
        <end position="392"/>
    </location>
</feature>
<feature type="transmembrane region" description="Helical" evidence="2">
    <location>
        <begin position="416"/>
        <end position="436"/>
    </location>
</feature>
<feature type="transmembrane region" description="Helical" evidence="2">
    <location>
        <begin position="453"/>
        <end position="473"/>
    </location>
</feature>
<feature type="transmembrane region" description="Helical" evidence="2">
    <location>
        <begin position="497"/>
        <end position="517"/>
    </location>
</feature>
<feature type="transmembrane region" description="Helical" evidence="2">
    <location>
        <begin position="542"/>
        <end position="562"/>
    </location>
</feature>
<feature type="region of interest" description="Disordered" evidence="3">
    <location>
        <begin position="1"/>
        <end position="23"/>
    </location>
</feature>
<feature type="compositionally biased region" description="Basic and acidic residues" evidence="3">
    <location>
        <begin position="1"/>
        <end position="16"/>
    </location>
</feature>
<proteinExistence type="evidence at transcript level"/>
<protein>
    <recommendedName>
        <fullName>Protein NRT1/ PTR FAMILY 3.1</fullName>
        <shortName>AtNPF3.1</shortName>
    </recommendedName>
</protein>
<accession>Q9SX20</accession>
<reference key="1">
    <citation type="journal article" date="2000" name="Nature">
        <title>Sequence and analysis of chromosome 1 of the plant Arabidopsis thaliana.</title>
        <authorList>
            <person name="Theologis A."/>
            <person name="Ecker J.R."/>
            <person name="Palm C.J."/>
            <person name="Federspiel N.A."/>
            <person name="Kaul S."/>
            <person name="White O."/>
            <person name="Alonso J."/>
            <person name="Altafi H."/>
            <person name="Araujo R."/>
            <person name="Bowman C.L."/>
            <person name="Brooks S.Y."/>
            <person name="Buehler E."/>
            <person name="Chan A."/>
            <person name="Chao Q."/>
            <person name="Chen H."/>
            <person name="Cheuk R.F."/>
            <person name="Chin C.W."/>
            <person name="Chung M.K."/>
            <person name="Conn L."/>
            <person name="Conway A.B."/>
            <person name="Conway A.R."/>
            <person name="Creasy T.H."/>
            <person name="Dewar K."/>
            <person name="Dunn P."/>
            <person name="Etgu P."/>
            <person name="Feldblyum T.V."/>
            <person name="Feng J.-D."/>
            <person name="Fong B."/>
            <person name="Fujii C.Y."/>
            <person name="Gill J.E."/>
            <person name="Goldsmith A.D."/>
            <person name="Haas B."/>
            <person name="Hansen N.F."/>
            <person name="Hughes B."/>
            <person name="Huizar L."/>
            <person name="Hunter J.L."/>
            <person name="Jenkins J."/>
            <person name="Johnson-Hopson C."/>
            <person name="Khan S."/>
            <person name="Khaykin E."/>
            <person name="Kim C.J."/>
            <person name="Koo H.L."/>
            <person name="Kremenetskaia I."/>
            <person name="Kurtz D.B."/>
            <person name="Kwan A."/>
            <person name="Lam B."/>
            <person name="Langin-Hooper S."/>
            <person name="Lee A."/>
            <person name="Lee J.M."/>
            <person name="Lenz C.A."/>
            <person name="Li J.H."/>
            <person name="Li Y.-P."/>
            <person name="Lin X."/>
            <person name="Liu S.X."/>
            <person name="Liu Z.A."/>
            <person name="Luros J.S."/>
            <person name="Maiti R."/>
            <person name="Marziali A."/>
            <person name="Militscher J."/>
            <person name="Miranda M."/>
            <person name="Nguyen M."/>
            <person name="Nierman W.C."/>
            <person name="Osborne B.I."/>
            <person name="Pai G."/>
            <person name="Peterson J."/>
            <person name="Pham P.K."/>
            <person name="Rizzo M."/>
            <person name="Rooney T."/>
            <person name="Rowley D."/>
            <person name="Sakano H."/>
            <person name="Salzberg S.L."/>
            <person name="Schwartz J.R."/>
            <person name="Shinn P."/>
            <person name="Southwick A.M."/>
            <person name="Sun H."/>
            <person name="Tallon L.J."/>
            <person name="Tambunga G."/>
            <person name="Toriumi M.J."/>
            <person name="Town C.D."/>
            <person name="Utterback T."/>
            <person name="Van Aken S."/>
            <person name="Vaysberg M."/>
            <person name="Vysotskaia V.S."/>
            <person name="Walker M."/>
            <person name="Wu D."/>
            <person name="Yu G."/>
            <person name="Fraser C.M."/>
            <person name="Venter J.C."/>
            <person name="Davis R.W."/>
        </authorList>
    </citation>
    <scope>NUCLEOTIDE SEQUENCE [LARGE SCALE GENOMIC DNA]</scope>
    <source>
        <strain>cv. Columbia</strain>
    </source>
</reference>
<reference key="2">
    <citation type="journal article" date="2017" name="Plant J.">
        <title>Araport11: a complete reannotation of the Arabidopsis thaliana reference genome.</title>
        <authorList>
            <person name="Cheng C.Y."/>
            <person name="Krishnakumar V."/>
            <person name="Chan A.P."/>
            <person name="Thibaud-Nissen F."/>
            <person name="Schobel S."/>
            <person name="Town C.D."/>
        </authorList>
    </citation>
    <scope>GENOME REANNOTATION</scope>
    <source>
        <strain>cv. Columbia</strain>
    </source>
</reference>
<reference key="3">
    <citation type="journal article" date="2003" name="Science">
        <title>Empirical analysis of transcriptional activity in the Arabidopsis genome.</title>
        <authorList>
            <person name="Yamada K."/>
            <person name="Lim J."/>
            <person name="Dale J.M."/>
            <person name="Chen H."/>
            <person name="Shinn P."/>
            <person name="Palm C.J."/>
            <person name="Southwick A.M."/>
            <person name="Wu H.C."/>
            <person name="Kim C.J."/>
            <person name="Nguyen M."/>
            <person name="Pham P.K."/>
            <person name="Cheuk R.F."/>
            <person name="Karlin-Newmann G."/>
            <person name="Liu S.X."/>
            <person name="Lam B."/>
            <person name="Sakano H."/>
            <person name="Wu T."/>
            <person name="Yu G."/>
            <person name="Miranda M."/>
            <person name="Quach H.L."/>
            <person name="Tripp M."/>
            <person name="Chang C.H."/>
            <person name="Lee J.M."/>
            <person name="Toriumi M.J."/>
            <person name="Chan M.M."/>
            <person name="Tang C.C."/>
            <person name="Onodera C.S."/>
            <person name="Deng J.M."/>
            <person name="Akiyama K."/>
            <person name="Ansari Y."/>
            <person name="Arakawa T."/>
            <person name="Banh J."/>
            <person name="Banno F."/>
            <person name="Bowser L."/>
            <person name="Brooks S.Y."/>
            <person name="Carninci P."/>
            <person name="Chao Q."/>
            <person name="Choy N."/>
            <person name="Enju A."/>
            <person name="Goldsmith A.D."/>
            <person name="Gurjal M."/>
            <person name="Hansen N.F."/>
            <person name="Hayashizaki Y."/>
            <person name="Johnson-Hopson C."/>
            <person name="Hsuan V.W."/>
            <person name="Iida K."/>
            <person name="Karnes M."/>
            <person name="Khan S."/>
            <person name="Koesema E."/>
            <person name="Ishida J."/>
            <person name="Jiang P.X."/>
            <person name="Jones T."/>
            <person name="Kawai J."/>
            <person name="Kamiya A."/>
            <person name="Meyers C."/>
            <person name="Nakajima M."/>
            <person name="Narusaka M."/>
            <person name="Seki M."/>
            <person name="Sakurai T."/>
            <person name="Satou M."/>
            <person name="Tamse R."/>
            <person name="Vaysberg M."/>
            <person name="Wallender E.K."/>
            <person name="Wong C."/>
            <person name="Yamamura Y."/>
            <person name="Yuan S."/>
            <person name="Shinozaki K."/>
            <person name="Davis R.W."/>
            <person name="Theologis A."/>
            <person name="Ecker J.R."/>
        </authorList>
    </citation>
    <scope>NUCLEOTIDE SEQUENCE [LARGE SCALE MRNA]</scope>
    <source>
        <strain>cv. Columbia</strain>
    </source>
</reference>
<reference key="4">
    <citation type="submission" date="2006-07" db="EMBL/GenBank/DDBJ databases">
        <title>Large-scale analysis of RIKEN Arabidopsis full-length (RAFL) cDNAs.</title>
        <authorList>
            <person name="Totoki Y."/>
            <person name="Seki M."/>
            <person name="Ishida J."/>
            <person name="Nakajima M."/>
            <person name="Enju A."/>
            <person name="Kamiya A."/>
            <person name="Narusaka M."/>
            <person name="Shin-i T."/>
            <person name="Nakagawa M."/>
            <person name="Sakamoto N."/>
            <person name="Oishi K."/>
            <person name="Kohara Y."/>
            <person name="Kobayashi M."/>
            <person name="Toyoda A."/>
            <person name="Sakaki Y."/>
            <person name="Sakurai T."/>
            <person name="Iida K."/>
            <person name="Akiyama K."/>
            <person name="Satou M."/>
            <person name="Toyoda T."/>
            <person name="Konagaya A."/>
            <person name="Carninci P."/>
            <person name="Kawai J."/>
            <person name="Hayashizaki Y."/>
            <person name="Shinozaki K."/>
        </authorList>
    </citation>
    <scope>NUCLEOTIDE SEQUENCE [LARGE SCALE MRNA]</scope>
    <source>
        <strain>cv. Columbia</strain>
    </source>
</reference>
<reference key="5">
    <citation type="journal article" date="2007" name="FEBS Lett.">
        <title>Nitrate transporters and peptide transporters.</title>
        <authorList>
            <person name="Tsay Y.F."/>
            <person name="Chiu C.C."/>
            <person name="Tsai C.B."/>
            <person name="Ho C.H."/>
            <person name="Hsu P.K."/>
        </authorList>
    </citation>
    <scope>TISSUE SPECIFICITY</scope>
    <scope>GENE FAMILY</scope>
</reference>
<reference key="6">
    <citation type="journal article" date="2007" name="Plant Cell Physiol.">
        <title>A nitrite transporter associated with nitrite uptake by higher plant chloroplasts.</title>
        <authorList>
            <person name="Sugiura M."/>
            <person name="Georgescu M.N."/>
            <person name="Takahashi M."/>
        </authorList>
    </citation>
    <scope>FUNCTION</scope>
    <scope>DISRUPTION PHENOTYPE</scope>
</reference>
<reference key="7">
    <citation type="journal article" date="2008" name="FEBS Lett.">
        <title>Chloroplast nitrite uptake is enhanced in Arabidopsis PII mutants.</title>
        <authorList>
            <person name="Ferrario-Mery S."/>
            <person name="Meyer C."/>
            <person name="Hodges M."/>
        </authorList>
    </citation>
    <scope>REGULATION</scope>
</reference>
<reference key="8">
    <citation type="journal article" date="2010" name="Plant Cell">
        <title>The Arabidopsis nitrate transporter NRT1.8 functions in nitrate removal from the xylem sap and mediates cadmium tolerance.</title>
        <authorList>
            <person name="Li J.Y."/>
            <person name="Fu Y.L."/>
            <person name="Pike S.M."/>
            <person name="Bao J."/>
            <person name="Tian W."/>
            <person name="Zhang Y."/>
            <person name="Chen C.Z."/>
            <person name="Zhang Y."/>
            <person name="Li H.M."/>
            <person name="Huang J."/>
            <person name="Li L.G."/>
            <person name="Schroeder J.I."/>
            <person name="Gassmann W."/>
            <person name="Gong J.M."/>
        </authorList>
    </citation>
    <scope>GENE FAMILY</scope>
</reference>
<reference key="9">
    <citation type="journal article" date="2014" name="Trends Plant Sci.">
        <title>A unified nomenclature of NITRATE TRANSPORTER 1/PEPTIDE TRANSPORTER family members in plants.</title>
        <authorList>
            <person name="Leran S."/>
            <person name="Varala K."/>
            <person name="Boyer J.C."/>
            <person name="Chiurazzi M."/>
            <person name="Crawford N."/>
            <person name="Daniel-Vedele F."/>
            <person name="David L."/>
            <person name="Dickstein R."/>
            <person name="Fernandez E."/>
            <person name="Forde B."/>
            <person name="Gassmann W."/>
            <person name="Geiger D."/>
            <person name="Gojon A."/>
            <person name="Gong J.M."/>
            <person name="Halkier B.A."/>
            <person name="Harris J.M."/>
            <person name="Hedrich R."/>
            <person name="Limami A.M."/>
            <person name="Rentsch D."/>
            <person name="Seo M."/>
            <person name="Tsay Y.F."/>
            <person name="Zhang M."/>
            <person name="Coruzzi G."/>
            <person name="Lacombe B."/>
        </authorList>
    </citation>
    <scope>GENE FAMILY</scope>
    <scope>NOMENCLATURE</scope>
</reference>
<gene>
    <name type="primary">NPF3.1</name>
    <name type="synonym">NITR</name>
    <name type="ordered locus">At1g68570</name>
    <name type="ORF">F24J5.19</name>
</gene>
<keyword id="KW-0472">Membrane</keyword>
<keyword id="KW-0534">Nitrate assimilation</keyword>
<keyword id="KW-1185">Reference proteome</keyword>
<keyword id="KW-0812">Transmembrane</keyword>
<keyword id="KW-1133">Transmembrane helix</keyword>
<keyword id="KW-0813">Transport</keyword>
<evidence type="ECO:0000250" key="1"/>
<evidence type="ECO:0000255" key="2"/>
<evidence type="ECO:0000256" key="3">
    <source>
        <dbReference type="SAM" id="MobiDB-lite"/>
    </source>
</evidence>
<evidence type="ECO:0000269" key="4">
    <source>
    </source>
</evidence>
<evidence type="ECO:0000269" key="5">
    <source>
    </source>
</evidence>
<evidence type="ECO:0000305" key="6"/>
<name>PTR18_ARATH</name>
<dbReference type="EMBL" id="AC008075">
    <property type="protein sequence ID" value="AAD49986.1"/>
    <property type="molecule type" value="Genomic_DNA"/>
</dbReference>
<dbReference type="EMBL" id="CP002684">
    <property type="protein sequence ID" value="AEE34812.1"/>
    <property type="molecule type" value="Genomic_DNA"/>
</dbReference>
<dbReference type="EMBL" id="AY091784">
    <property type="protein sequence ID" value="AAM10330.1"/>
    <property type="molecule type" value="mRNA"/>
</dbReference>
<dbReference type="EMBL" id="BT002278">
    <property type="protein sequence ID" value="AAN72289.1"/>
    <property type="molecule type" value="mRNA"/>
</dbReference>
<dbReference type="EMBL" id="AK226963">
    <property type="protein sequence ID" value="BAE99031.1"/>
    <property type="molecule type" value="mRNA"/>
</dbReference>
<dbReference type="PIR" id="A96710">
    <property type="entry name" value="A96710"/>
</dbReference>
<dbReference type="RefSeq" id="NP_177024.1">
    <property type="nucleotide sequence ID" value="NM_105528.5"/>
</dbReference>
<dbReference type="SMR" id="Q9SX20"/>
<dbReference type="FunCoup" id="Q9SX20">
    <property type="interactions" value="1805"/>
</dbReference>
<dbReference type="STRING" id="3702.Q9SX20"/>
<dbReference type="TCDB" id="2.A.17.3.6">
    <property type="family name" value="the proton-dependent oligopeptide transporter (pot/ptr) family"/>
</dbReference>
<dbReference type="iPTMnet" id="Q9SX20"/>
<dbReference type="PaxDb" id="3702-AT1G68570.1"/>
<dbReference type="ProteomicsDB" id="226442"/>
<dbReference type="EnsemblPlants" id="AT1G68570.1">
    <property type="protein sequence ID" value="AT1G68570.1"/>
    <property type="gene ID" value="AT1G68570"/>
</dbReference>
<dbReference type="GeneID" id="843186"/>
<dbReference type="Gramene" id="AT1G68570.1">
    <property type="protein sequence ID" value="AT1G68570.1"/>
    <property type="gene ID" value="AT1G68570"/>
</dbReference>
<dbReference type="KEGG" id="ath:AT1G68570"/>
<dbReference type="Araport" id="AT1G68570"/>
<dbReference type="TAIR" id="AT1G68570">
    <property type="gene designation" value="NPF3.1"/>
</dbReference>
<dbReference type="eggNOG" id="KOG1237">
    <property type="taxonomic scope" value="Eukaryota"/>
</dbReference>
<dbReference type="HOGENOM" id="CLU_009313_4_1_1"/>
<dbReference type="InParanoid" id="Q9SX20"/>
<dbReference type="OrthoDB" id="8904098at2759"/>
<dbReference type="PhylomeDB" id="Q9SX20"/>
<dbReference type="PRO" id="PR:Q9SX20"/>
<dbReference type="Proteomes" id="UP000006548">
    <property type="component" value="Chromosome 1"/>
</dbReference>
<dbReference type="ExpressionAtlas" id="Q9SX20">
    <property type="expression patterns" value="baseline and differential"/>
</dbReference>
<dbReference type="GO" id="GO:0097708">
    <property type="term" value="C:intracellular vesicle"/>
    <property type="evidence" value="ECO:0000314"/>
    <property type="project" value="TAIR"/>
</dbReference>
<dbReference type="GO" id="GO:0005886">
    <property type="term" value="C:plasma membrane"/>
    <property type="evidence" value="ECO:0000314"/>
    <property type="project" value="TAIR"/>
</dbReference>
<dbReference type="GO" id="GO:0022857">
    <property type="term" value="F:transmembrane transporter activity"/>
    <property type="evidence" value="ECO:0007669"/>
    <property type="project" value="InterPro"/>
</dbReference>
<dbReference type="GO" id="GO:0010336">
    <property type="term" value="P:gibberellic acid homeostasis"/>
    <property type="evidence" value="ECO:0000315"/>
    <property type="project" value="TAIR"/>
</dbReference>
<dbReference type="GO" id="GO:0042128">
    <property type="term" value="P:nitrate assimilation"/>
    <property type="evidence" value="ECO:0007669"/>
    <property type="project" value="UniProtKB-KW"/>
</dbReference>
<dbReference type="CDD" id="cd17415">
    <property type="entry name" value="MFS_NPF3"/>
    <property type="match status" value="1"/>
</dbReference>
<dbReference type="Gene3D" id="1.20.1250.20">
    <property type="entry name" value="MFS general substrate transporter like domains"/>
    <property type="match status" value="1"/>
</dbReference>
<dbReference type="InterPro" id="IPR036259">
    <property type="entry name" value="MFS_trans_sf"/>
</dbReference>
<dbReference type="InterPro" id="IPR000109">
    <property type="entry name" value="POT_fam"/>
</dbReference>
<dbReference type="PANTHER" id="PTHR11654">
    <property type="entry name" value="OLIGOPEPTIDE TRANSPORTER-RELATED"/>
    <property type="match status" value="1"/>
</dbReference>
<dbReference type="Pfam" id="PF00854">
    <property type="entry name" value="PTR2"/>
    <property type="match status" value="1"/>
</dbReference>
<dbReference type="SUPFAM" id="SSF103473">
    <property type="entry name" value="MFS general substrate transporter"/>
    <property type="match status" value="1"/>
</dbReference>
<organism>
    <name type="scientific">Arabidopsis thaliana</name>
    <name type="common">Mouse-ear cress</name>
    <dbReference type="NCBI Taxonomy" id="3702"/>
    <lineage>
        <taxon>Eukaryota</taxon>
        <taxon>Viridiplantae</taxon>
        <taxon>Streptophyta</taxon>
        <taxon>Embryophyta</taxon>
        <taxon>Tracheophyta</taxon>
        <taxon>Spermatophyta</taxon>
        <taxon>Magnoliopsida</taxon>
        <taxon>eudicotyledons</taxon>
        <taxon>Gunneridae</taxon>
        <taxon>Pentapetalae</taxon>
        <taxon>rosids</taxon>
        <taxon>malvids</taxon>
        <taxon>Brassicales</taxon>
        <taxon>Brassicaceae</taxon>
        <taxon>Camelineae</taxon>
        <taxon>Arabidopsis</taxon>
    </lineage>
</organism>
<comment type="function">
    <text evidence="5">May act as an efflux-type nitrite transporter. Not regulated by the PII protein involved in the regulation of nitrite uptake into higher plant chloroplasts.</text>
</comment>
<comment type="subcellular location">
    <subcellularLocation>
        <location evidence="1">Membrane</location>
        <topology evidence="1">Multi-pass membrane protein</topology>
    </subcellularLocation>
</comment>
<comment type="tissue specificity">
    <text evidence="4">Expressed in shoots, stems, leaves, flowers and siliques.</text>
</comment>
<comment type="disruption phenotype">
    <text evidence="5">Slower growth and delayed bolting. Nitrite accumulation in leaves.</text>
</comment>
<comment type="similarity">
    <text evidence="6">Belongs to the major facilitator superfamily. Proton-dependent oligopeptide transporter (POT/PTR) (TC 2.A.17) family.</text>
</comment>
<sequence length="596" mass="66213">MEEQSKNKISEEEKQLHGRPNRPKGGLITMPFIFANEICEKLAVVGFHANMISYLTTQLHLPLTKAANTLTNFAGTSSLTPLLGAFIADSFAGRFWTITFASIIYQIGMTLLTISAIIPTLRPPPCKGEEVCVVADTAQLSILYVALLLGALGSGGIRPCVVAFGADQFDESDPNQTTKTWNYFNWYYFCMGAAVLLAVTVLVWIQDNVGWGLGLGIPTVAMFLSVIAFVGGFQLYRHLVPAGSPFTRLIQVGVAAFRKRKLRMVSDPSLLYFNDEIDAPISLGGKLTHTKHMSFLDKAAIVTEEDNLKPGQIPNHWRLSTVHRVEELKSVIRMGPIGASGILLITAYAQQGTFSLQQAKTMNRHLTNSFQIPAGSMSVFTTVAMLTTIIFYDRVFVKVARKFTGLERGITFLHRMGIGFVISIIATLVAGFVEVKRKSVAIEHGLLDKPHTIVPISFLWLIPQYGLHGVAEAFMSIGHLEFFYDQAPESMRSTATALFWMAISIGNYVSTLLVTLVHKFSAKPDGSNWLPDNNLNRGRLEYFYWLITVLQAVNLVYYLWCAKIYTYKPVQVHHSKEDSSPVKEELQLSNRSLVDE</sequence>